<sequence>MIFMVIKKIFGENFNFNKNIDIKKIFKLDKNVKKDREENESYLDALKEIYEEIKNLEIYEKMTIGMAEIIIGYDNVEKTKKYIVIEPILTKEEIKLFLKLRKVVQALLDVPVEEIDKEKLEDYLKEKIKEIFDDLKLTLDDVTRHKLIYFLIKYLIGYGKIDALMKDENLEDISCTGVGKPVYVFHRKYEHLKTNIKFETDEELDSFCISLAQRCGKSLTLANPIVDGSLPDGSRLNVTLGRDISDMVQHLQ</sequence>
<organism>
    <name type="scientific">Methanocaldococcus jannaschii (strain ATCC 43067 / DSM 2661 / JAL-1 / JCM 10045 / NBRC 100440)</name>
    <name type="common">Methanococcus jannaschii</name>
    <dbReference type="NCBI Taxonomy" id="243232"/>
    <lineage>
        <taxon>Archaea</taxon>
        <taxon>Methanobacteriati</taxon>
        <taxon>Methanobacteriota</taxon>
        <taxon>Methanomada group</taxon>
        <taxon>Methanococci</taxon>
        <taxon>Methanococcales</taxon>
        <taxon>Methanocaldococcaceae</taxon>
        <taxon>Methanocaldococcus</taxon>
    </lineage>
</organism>
<accession>Q58684</accession>
<reference key="1">
    <citation type="journal article" date="1996" name="Science">
        <title>Complete genome sequence of the methanogenic archaeon, Methanococcus jannaschii.</title>
        <authorList>
            <person name="Bult C.J."/>
            <person name="White O."/>
            <person name="Olsen G.J."/>
            <person name="Zhou L."/>
            <person name="Fleischmann R.D."/>
            <person name="Sutton G.G."/>
            <person name="Blake J.A."/>
            <person name="FitzGerald L.M."/>
            <person name="Clayton R.A."/>
            <person name="Gocayne J.D."/>
            <person name="Kerlavage A.R."/>
            <person name="Dougherty B.A."/>
            <person name="Tomb J.-F."/>
            <person name="Adams M.D."/>
            <person name="Reich C.I."/>
            <person name="Overbeek R."/>
            <person name="Kirkness E.F."/>
            <person name="Weinstock K.G."/>
            <person name="Merrick J.M."/>
            <person name="Glodek A."/>
            <person name="Scott J.L."/>
            <person name="Geoghagen N.S.M."/>
            <person name="Weidman J.F."/>
            <person name="Fuhrmann J.L."/>
            <person name="Nguyen D."/>
            <person name="Utterback T.R."/>
            <person name="Kelley J.M."/>
            <person name="Peterson J.D."/>
            <person name="Sadow P.W."/>
            <person name="Hanna M.C."/>
            <person name="Cotton M.D."/>
            <person name="Roberts K.M."/>
            <person name="Hurst M.A."/>
            <person name="Kaine B.P."/>
            <person name="Borodovsky M."/>
            <person name="Klenk H.-P."/>
            <person name="Fraser C.M."/>
            <person name="Smith H.O."/>
            <person name="Woese C.R."/>
            <person name="Venter J.C."/>
        </authorList>
    </citation>
    <scope>NUCLEOTIDE SEQUENCE [LARGE SCALE GENOMIC DNA]</scope>
    <source>
        <strain>ATCC 43067 / DSM 2661 / JAL-1 / JCM 10045 / NBRC 100440</strain>
    </source>
</reference>
<name>Y1288_METJA</name>
<protein>
    <recommendedName>
        <fullName>Uncharacterized protein MJ1288</fullName>
    </recommendedName>
</protein>
<dbReference type="EMBL" id="L77117">
    <property type="protein sequence ID" value="AAB99290.1"/>
    <property type="molecule type" value="Genomic_DNA"/>
</dbReference>
<dbReference type="PIR" id="G64460">
    <property type="entry name" value="G64460"/>
</dbReference>
<dbReference type="SMR" id="Q58684"/>
<dbReference type="STRING" id="243232.MJ_1288"/>
<dbReference type="PaxDb" id="243232-MJ_1288"/>
<dbReference type="EnsemblBacteria" id="AAB99290">
    <property type="protein sequence ID" value="AAB99290"/>
    <property type="gene ID" value="MJ_1288"/>
</dbReference>
<dbReference type="KEGG" id="mja:MJ_1288"/>
<dbReference type="eggNOG" id="arCOG01817">
    <property type="taxonomic scope" value="Archaea"/>
</dbReference>
<dbReference type="HOGENOM" id="CLU_1100963_0_0_2"/>
<dbReference type="InParanoid" id="Q58684"/>
<dbReference type="PhylomeDB" id="Q58684"/>
<dbReference type="Proteomes" id="UP000000805">
    <property type="component" value="Chromosome"/>
</dbReference>
<dbReference type="GO" id="GO:0016887">
    <property type="term" value="F:ATP hydrolysis activity"/>
    <property type="evidence" value="ECO:0007669"/>
    <property type="project" value="InterPro"/>
</dbReference>
<dbReference type="Gene3D" id="3.30.450.380">
    <property type="match status" value="1"/>
</dbReference>
<dbReference type="InterPro" id="IPR027417">
    <property type="entry name" value="P-loop_NTPase"/>
</dbReference>
<dbReference type="InterPro" id="IPR050921">
    <property type="entry name" value="T4SS_GSP_E_ATPase"/>
</dbReference>
<dbReference type="PANTHER" id="PTHR30486">
    <property type="entry name" value="TWITCHING MOTILITY PROTEIN PILT"/>
    <property type="match status" value="1"/>
</dbReference>
<dbReference type="PANTHER" id="PTHR30486:SF6">
    <property type="entry name" value="TYPE IV PILUS RETRACTATION ATPASE PILT"/>
    <property type="match status" value="1"/>
</dbReference>
<dbReference type="SUPFAM" id="SSF52540">
    <property type="entry name" value="P-loop containing nucleoside triphosphate hydrolases"/>
    <property type="match status" value="1"/>
</dbReference>
<keyword id="KW-1185">Reference proteome</keyword>
<feature type="chain" id="PRO_0000207312" description="Uncharacterized protein MJ1288">
    <location>
        <begin position="1"/>
        <end position="252"/>
    </location>
</feature>
<evidence type="ECO:0000305" key="1"/>
<comment type="similarity">
    <text evidence="1">Belongs to the GSP E family.</text>
</comment>
<proteinExistence type="inferred from homology"/>
<gene>
    <name type="ordered locus">MJ1288</name>
</gene>